<gene>
    <name evidence="2" type="primary">argF</name>
    <name type="ordered locus">MA_3310</name>
</gene>
<comment type="function">
    <text evidence="1">Reversibly catalyzes the transfer of the carbamoyl group from carbamoyl phosphate (CP) to the N(epsilon) atom of ornithine (ORN) to produce L-citrulline.</text>
</comment>
<comment type="catalytic activity">
    <reaction evidence="2">
        <text>carbamoyl phosphate + L-ornithine = L-citrulline + phosphate + H(+)</text>
        <dbReference type="Rhea" id="RHEA:19513"/>
        <dbReference type="ChEBI" id="CHEBI:15378"/>
        <dbReference type="ChEBI" id="CHEBI:43474"/>
        <dbReference type="ChEBI" id="CHEBI:46911"/>
        <dbReference type="ChEBI" id="CHEBI:57743"/>
        <dbReference type="ChEBI" id="CHEBI:58228"/>
        <dbReference type="EC" id="2.1.3.3"/>
    </reaction>
</comment>
<comment type="pathway">
    <text evidence="2">Amino-acid biosynthesis; L-arginine biosynthesis; L-arginine from L-ornithine and carbamoyl phosphate: step 1/3.</text>
</comment>
<comment type="subcellular location">
    <subcellularLocation>
        <location evidence="2">Cytoplasm</location>
    </subcellularLocation>
</comment>
<comment type="similarity">
    <text evidence="2">Belongs to the aspartate/ornithine carbamoyltransferase superfamily. OTCase family.</text>
</comment>
<reference key="1">
    <citation type="journal article" date="2002" name="Genome Res.">
        <title>The genome of Methanosarcina acetivorans reveals extensive metabolic and physiological diversity.</title>
        <authorList>
            <person name="Galagan J.E."/>
            <person name="Nusbaum C."/>
            <person name="Roy A."/>
            <person name="Endrizzi M.G."/>
            <person name="Macdonald P."/>
            <person name="FitzHugh W."/>
            <person name="Calvo S."/>
            <person name="Engels R."/>
            <person name="Smirnov S."/>
            <person name="Atnoor D."/>
            <person name="Brown A."/>
            <person name="Allen N."/>
            <person name="Naylor J."/>
            <person name="Stange-Thomann N."/>
            <person name="DeArellano K."/>
            <person name="Johnson R."/>
            <person name="Linton L."/>
            <person name="McEwan P."/>
            <person name="McKernan K."/>
            <person name="Talamas J."/>
            <person name="Tirrell A."/>
            <person name="Ye W."/>
            <person name="Zimmer A."/>
            <person name="Barber R.D."/>
            <person name="Cann I."/>
            <person name="Graham D.E."/>
            <person name="Grahame D.A."/>
            <person name="Guss A.M."/>
            <person name="Hedderich R."/>
            <person name="Ingram-Smith C."/>
            <person name="Kuettner H.C."/>
            <person name="Krzycki J.A."/>
            <person name="Leigh J.A."/>
            <person name="Li W."/>
            <person name="Liu J."/>
            <person name="Mukhopadhyay B."/>
            <person name="Reeve J.N."/>
            <person name="Smith K."/>
            <person name="Springer T.A."/>
            <person name="Umayam L.A."/>
            <person name="White O."/>
            <person name="White R.H."/>
            <person name="de Macario E.C."/>
            <person name="Ferry J.G."/>
            <person name="Jarrell K.F."/>
            <person name="Jing H."/>
            <person name="Macario A.J.L."/>
            <person name="Paulsen I.T."/>
            <person name="Pritchett M."/>
            <person name="Sowers K.R."/>
            <person name="Swanson R.V."/>
            <person name="Zinder S.H."/>
            <person name="Lander E."/>
            <person name="Metcalf W.W."/>
            <person name="Birren B."/>
        </authorList>
    </citation>
    <scope>NUCLEOTIDE SEQUENCE [LARGE SCALE GENOMIC DNA]</scope>
    <source>
        <strain>ATCC 35395 / DSM 2834 / JCM 12185 / C2A</strain>
    </source>
</reference>
<accession>Q8TKT5</accession>
<sequence>MKRDVLSITDLSKEEIYELLESAADLKAKRKAGESTEYLKNKSLGMIFEKSSTRTRVSFEVAMTDFGGHALYLNSRDIQVGRGETIEDTARTLSGYLHGLMARVMSHDTVEKLAKYSTMPVINALSDREHPCQILGDFMTIMEFKKKFEGLKFAWVGDGNNVCNSALLGSAIMGMEFAVACPKGYEPKAEFLEQAKALGGKFTITDDPKVAAKDADIIYTDVWVSMGDEAEQEKRLREFASFQVNTELLGVAKPDVIVMHCLPARRGLEITDEVMDGPNSVIFEEAENRLHAQKALILKLMR</sequence>
<organism>
    <name type="scientific">Methanosarcina acetivorans (strain ATCC 35395 / DSM 2834 / JCM 12185 / C2A)</name>
    <dbReference type="NCBI Taxonomy" id="188937"/>
    <lineage>
        <taxon>Archaea</taxon>
        <taxon>Methanobacteriati</taxon>
        <taxon>Methanobacteriota</taxon>
        <taxon>Stenosarchaea group</taxon>
        <taxon>Methanomicrobia</taxon>
        <taxon>Methanosarcinales</taxon>
        <taxon>Methanosarcinaceae</taxon>
        <taxon>Methanosarcina</taxon>
    </lineage>
</organism>
<evidence type="ECO:0000250" key="1"/>
<evidence type="ECO:0000255" key="2">
    <source>
        <dbReference type="HAMAP-Rule" id="MF_01109"/>
    </source>
</evidence>
<protein>
    <recommendedName>
        <fullName evidence="2">Ornithine carbamoyltransferase</fullName>
        <shortName evidence="2">OTCase</shortName>
        <ecNumber evidence="2">2.1.3.3</ecNumber>
    </recommendedName>
</protein>
<feature type="chain" id="PRO_0000113064" description="Ornithine carbamoyltransferase">
    <location>
        <begin position="1"/>
        <end position="302"/>
    </location>
</feature>
<feature type="binding site" evidence="2">
    <location>
        <begin position="52"/>
        <end position="55"/>
    </location>
    <ligand>
        <name>carbamoyl phosphate</name>
        <dbReference type="ChEBI" id="CHEBI:58228"/>
    </ligand>
</feature>
<feature type="binding site" evidence="2">
    <location>
        <position position="79"/>
    </location>
    <ligand>
        <name>carbamoyl phosphate</name>
        <dbReference type="ChEBI" id="CHEBI:58228"/>
    </ligand>
</feature>
<feature type="binding site" evidence="2">
    <location>
        <position position="103"/>
    </location>
    <ligand>
        <name>carbamoyl phosphate</name>
        <dbReference type="ChEBI" id="CHEBI:58228"/>
    </ligand>
</feature>
<feature type="binding site" evidence="2">
    <location>
        <begin position="130"/>
        <end position="133"/>
    </location>
    <ligand>
        <name>carbamoyl phosphate</name>
        <dbReference type="ChEBI" id="CHEBI:58228"/>
    </ligand>
</feature>
<feature type="binding site" evidence="2">
    <location>
        <position position="161"/>
    </location>
    <ligand>
        <name>L-ornithine</name>
        <dbReference type="ChEBI" id="CHEBI:46911"/>
    </ligand>
</feature>
<feature type="binding site" evidence="2">
    <location>
        <position position="221"/>
    </location>
    <ligand>
        <name>L-ornithine</name>
        <dbReference type="ChEBI" id="CHEBI:46911"/>
    </ligand>
</feature>
<feature type="binding site" evidence="2">
    <location>
        <begin position="225"/>
        <end position="226"/>
    </location>
    <ligand>
        <name>L-ornithine</name>
        <dbReference type="ChEBI" id="CHEBI:46911"/>
    </ligand>
</feature>
<feature type="binding site" evidence="2">
    <location>
        <begin position="261"/>
        <end position="262"/>
    </location>
    <ligand>
        <name>carbamoyl phosphate</name>
        <dbReference type="ChEBI" id="CHEBI:58228"/>
    </ligand>
</feature>
<feature type="binding site" evidence="2">
    <location>
        <position position="289"/>
    </location>
    <ligand>
        <name>carbamoyl phosphate</name>
        <dbReference type="ChEBI" id="CHEBI:58228"/>
    </ligand>
</feature>
<keyword id="KW-0028">Amino-acid biosynthesis</keyword>
<keyword id="KW-0055">Arginine biosynthesis</keyword>
<keyword id="KW-0963">Cytoplasm</keyword>
<keyword id="KW-1185">Reference proteome</keyword>
<keyword id="KW-0808">Transferase</keyword>
<dbReference type="EC" id="2.1.3.3" evidence="2"/>
<dbReference type="EMBL" id="AE010299">
    <property type="protein sequence ID" value="AAM06680.1"/>
    <property type="molecule type" value="Genomic_DNA"/>
</dbReference>
<dbReference type="RefSeq" id="WP_011023243.1">
    <property type="nucleotide sequence ID" value="NC_003552.1"/>
</dbReference>
<dbReference type="SMR" id="Q8TKT5"/>
<dbReference type="FunCoup" id="Q8TKT5">
    <property type="interactions" value="191"/>
</dbReference>
<dbReference type="STRING" id="188937.MA_3310"/>
<dbReference type="EnsemblBacteria" id="AAM06680">
    <property type="protein sequence ID" value="AAM06680"/>
    <property type="gene ID" value="MA_3310"/>
</dbReference>
<dbReference type="GeneID" id="1475203"/>
<dbReference type="KEGG" id="mac:MA_3310"/>
<dbReference type="HOGENOM" id="CLU_043846_3_2_2"/>
<dbReference type="InParanoid" id="Q8TKT5"/>
<dbReference type="OrthoDB" id="4696at2157"/>
<dbReference type="PhylomeDB" id="Q8TKT5"/>
<dbReference type="UniPathway" id="UPA00068">
    <property type="reaction ID" value="UER00112"/>
</dbReference>
<dbReference type="Proteomes" id="UP000002487">
    <property type="component" value="Chromosome"/>
</dbReference>
<dbReference type="GO" id="GO:0005737">
    <property type="term" value="C:cytoplasm"/>
    <property type="evidence" value="ECO:0007669"/>
    <property type="project" value="UniProtKB-SubCell"/>
</dbReference>
<dbReference type="GO" id="GO:0016597">
    <property type="term" value="F:amino acid binding"/>
    <property type="evidence" value="ECO:0007669"/>
    <property type="project" value="InterPro"/>
</dbReference>
<dbReference type="GO" id="GO:0004585">
    <property type="term" value="F:ornithine carbamoyltransferase activity"/>
    <property type="evidence" value="ECO:0000318"/>
    <property type="project" value="GO_Central"/>
</dbReference>
<dbReference type="GO" id="GO:0042450">
    <property type="term" value="P:arginine biosynthetic process via ornithine"/>
    <property type="evidence" value="ECO:0000318"/>
    <property type="project" value="GO_Central"/>
</dbReference>
<dbReference type="GO" id="GO:0019240">
    <property type="term" value="P:citrulline biosynthetic process"/>
    <property type="evidence" value="ECO:0000318"/>
    <property type="project" value="GO_Central"/>
</dbReference>
<dbReference type="GO" id="GO:0006526">
    <property type="term" value="P:L-arginine biosynthetic process"/>
    <property type="evidence" value="ECO:0007669"/>
    <property type="project" value="UniProtKB-UniRule"/>
</dbReference>
<dbReference type="FunFam" id="3.40.50.1370:FF:000008">
    <property type="entry name" value="Ornithine carbamoyltransferase"/>
    <property type="match status" value="1"/>
</dbReference>
<dbReference type="FunFam" id="3.40.50.1370:FF:000016">
    <property type="entry name" value="Ornithine carbamoyltransferase"/>
    <property type="match status" value="1"/>
</dbReference>
<dbReference type="Gene3D" id="3.40.50.1370">
    <property type="entry name" value="Aspartate/ornithine carbamoyltransferase"/>
    <property type="match status" value="2"/>
</dbReference>
<dbReference type="HAMAP" id="MF_01109">
    <property type="entry name" value="OTCase"/>
    <property type="match status" value="1"/>
</dbReference>
<dbReference type="InterPro" id="IPR006132">
    <property type="entry name" value="Asp/Orn_carbamoyltranf_P-bd"/>
</dbReference>
<dbReference type="InterPro" id="IPR006130">
    <property type="entry name" value="Asp/Orn_carbamoylTrfase"/>
</dbReference>
<dbReference type="InterPro" id="IPR036901">
    <property type="entry name" value="Asp/Orn_carbamoylTrfase_sf"/>
</dbReference>
<dbReference type="InterPro" id="IPR006131">
    <property type="entry name" value="Asp_carbamoyltransf_Asp/Orn-bd"/>
</dbReference>
<dbReference type="InterPro" id="IPR002292">
    <property type="entry name" value="Orn/put_carbamltrans"/>
</dbReference>
<dbReference type="InterPro" id="IPR024904">
    <property type="entry name" value="OTCase_ArgI"/>
</dbReference>
<dbReference type="NCBIfam" id="TIGR00658">
    <property type="entry name" value="orni_carb_tr"/>
    <property type="match status" value="1"/>
</dbReference>
<dbReference type="NCBIfam" id="NF001986">
    <property type="entry name" value="PRK00779.1"/>
    <property type="match status" value="1"/>
</dbReference>
<dbReference type="PANTHER" id="PTHR45753">
    <property type="entry name" value="ORNITHINE CARBAMOYLTRANSFERASE, MITOCHONDRIAL"/>
    <property type="match status" value="1"/>
</dbReference>
<dbReference type="PANTHER" id="PTHR45753:SF3">
    <property type="entry name" value="ORNITHINE TRANSCARBAMYLASE, MITOCHONDRIAL"/>
    <property type="match status" value="1"/>
</dbReference>
<dbReference type="Pfam" id="PF00185">
    <property type="entry name" value="OTCace"/>
    <property type="match status" value="1"/>
</dbReference>
<dbReference type="Pfam" id="PF02729">
    <property type="entry name" value="OTCace_N"/>
    <property type="match status" value="1"/>
</dbReference>
<dbReference type="PRINTS" id="PR00100">
    <property type="entry name" value="AOTCASE"/>
</dbReference>
<dbReference type="PRINTS" id="PR00102">
    <property type="entry name" value="OTCASE"/>
</dbReference>
<dbReference type="SUPFAM" id="SSF53671">
    <property type="entry name" value="Aspartate/ornithine carbamoyltransferase"/>
    <property type="match status" value="1"/>
</dbReference>
<dbReference type="PROSITE" id="PS00097">
    <property type="entry name" value="CARBAMOYLTRANSFERASE"/>
    <property type="match status" value="1"/>
</dbReference>
<proteinExistence type="inferred from homology"/>
<name>OTC_METAC</name>